<proteinExistence type="evidence at protein level"/>
<evidence type="ECO:0000255" key="1">
    <source>
        <dbReference type="PROSITE-ProRule" id="PRU00042"/>
    </source>
</evidence>
<evidence type="ECO:0000255" key="2">
    <source>
        <dbReference type="PROSITE-ProRule" id="PRU00119"/>
    </source>
</evidence>
<evidence type="ECO:0000256" key="3">
    <source>
        <dbReference type="SAM" id="MobiDB-lite"/>
    </source>
</evidence>
<evidence type="ECO:0000269" key="4">
    <source>
    </source>
</evidence>
<evidence type="ECO:0000303" key="5">
    <source>
    </source>
</evidence>
<evidence type="ECO:0000305" key="6"/>
<comment type="function">
    <text>May be involved in transcriptional regulation.</text>
</comment>
<comment type="interaction">
    <interactant intactId="EBI-5278328">
        <id>Q8IZC7</id>
    </interactant>
    <interactant intactId="EBI-10171697">
        <id>Q6A162</id>
        <label>KRT40</label>
    </interactant>
    <organismsDiffer>false</organismsDiffer>
    <experiments>3</experiments>
</comment>
<comment type="interaction">
    <interactant intactId="EBI-5278328">
        <id>Q8IZC7</id>
    </interactant>
    <interactant intactId="EBI-10172290">
        <id>P60409</id>
        <label>KRTAP10-7</label>
    </interactant>
    <organismsDiffer>false</organismsDiffer>
    <experiments>6</experiments>
</comment>
<comment type="interaction">
    <interactant intactId="EBI-5278328">
        <id>Q8IZC7</id>
    </interactant>
    <interactant intactId="EBI-10171774">
        <id>P60410</id>
        <label>KRTAP10-8</label>
    </interactant>
    <organismsDiffer>false</organismsDiffer>
    <experiments>3</experiments>
</comment>
<comment type="interaction">
    <interactant intactId="EBI-5278328">
        <id>Q8IZC7</id>
    </interactant>
    <interactant intactId="EBI-11953334">
        <id>P60328</id>
        <label>KRTAP12-3</label>
    </interactant>
    <organismsDiffer>false</organismsDiffer>
    <experiments>3</experiments>
</comment>
<comment type="interaction">
    <interactant intactId="EBI-5278328">
        <id>Q8IZC7</id>
    </interactant>
    <interactant intactId="EBI-11988175">
        <id>Q9BYP8</id>
        <label>KRTAP17-1</label>
    </interactant>
    <organismsDiffer>false</organismsDiffer>
    <experiments>3</experiments>
</comment>
<comment type="interaction">
    <interactant intactId="EBI-5278328">
        <id>Q8IZC7</id>
    </interactant>
    <interactant intactId="EBI-724076">
        <id>Q99750</id>
        <label>MDFI</label>
    </interactant>
    <organismsDiffer>false</organismsDiffer>
    <experiments>6</experiments>
</comment>
<comment type="interaction">
    <interactant intactId="EBI-5278328">
        <id>Q8IZC7</id>
    </interactant>
    <interactant intactId="EBI-3921553">
        <id>P17020</id>
        <label>ZNF16</label>
    </interactant>
    <organismsDiffer>false</organismsDiffer>
    <experiments>3</experiments>
</comment>
<comment type="subcellular location">
    <subcellularLocation>
        <location evidence="6">Nucleus</location>
    </subcellularLocation>
</comment>
<comment type="alternative products">
    <event type="alternative splicing"/>
    <isoform>
        <id>Q8IZC7-1</id>
        <name>1</name>
        <sequence type="displayed"/>
    </isoform>
    <isoform>
        <id>Q8IZC7-2</id>
        <name>2</name>
        <sequence type="described" ref="VSP_055937"/>
    </isoform>
</comment>
<comment type="tissue specificity">
    <text evidence="4">Expressed in a variety of adult and fetal tissues.</text>
</comment>
<comment type="similarity">
    <text evidence="6">Belongs to the krueppel C2H2-type zinc-finger protein family.</text>
</comment>
<reference key="1">
    <citation type="journal article" date="2004" name="Mamm. Genome">
        <title>A novel Kruppel-associated box identified in a panel of mammalian zinc finger proteins.</title>
        <authorList>
            <person name="Looman C."/>
            <person name="Hellman L."/>
            <person name="Abrink M."/>
        </authorList>
    </citation>
    <scope>NUCLEOTIDE SEQUENCE [MRNA] (ISOFORM 1)</scope>
    <scope>TISSUE SPECIFICITY</scope>
</reference>
<reference key="2">
    <citation type="journal article" date="2004" name="Nature">
        <title>The DNA sequence and biology of human chromosome 19.</title>
        <authorList>
            <person name="Grimwood J."/>
            <person name="Gordon L.A."/>
            <person name="Olsen A.S."/>
            <person name="Terry A."/>
            <person name="Schmutz J."/>
            <person name="Lamerdin J.E."/>
            <person name="Hellsten U."/>
            <person name="Goodstein D."/>
            <person name="Couronne O."/>
            <person name="Tran-Gyamfi M."/>
            <person name="Aerts A."/>
            <person name="Altherr M."/>
            <person name="Ashworth L."/>
            <person name="Bajorek E."/>
            <person name="Black S."/>
            <person name="Branscomb E."/>
            <person name="Caenepeel S."/>
            <person name="Carrano A.V."/>
            <person name="Caoile C."/>
            <person name="Chan Y.M."/>
            <person name="Christensen M."/>
            <person name="Cleland C.A."/>
            <person name="Copeland A."/>
            <person name="Dalin E."/>
            <person name="Dehal P."/>
            <person name="Denys M."/>
            <person name="Detter J.C."/>
            <person name="Escobar J."/>
            <person name="Flowers D."/>
            <person name="Fotopulos D."/>
            <person name="Garcia C."/>
            <person name="Georgescu A.M."/>
            <person name="Glavina T."/>
            <person name="Gomez M."/>
            <person name="Gonzales E."/>
            <person name="Groza M."/>
            <person name="Hammon N."/>
            <person name="Hawkins T."/>
            <person name="Haydu L."/>
            <person name="Ho I."/>
            <person name="Huang W."/>
            <person name="Israni S."/>
            <person name="Jett J."/>
            <person name="Kadner K."/>
            <person name="Kimball H."/>
            <person name="Kobayashi A."/>
            <person name="Larionov V."/>
            <person name="Leem S.-H."/>
            <person name="Lopez F."/>
            <person name="Lou Y."/>
            <person name="Lowry S."/>
            <person name="Malfatti S."/>
            <person name="Martinez D."/>
            <person name="McCready P.M."/>
            <person name="Medina C."/>
            <person name="Morgan J."/>
            <person name="Nelson K."/>
            <person name="Nolan M."/>
            <person name="Ovcharenko I."/>
            <person name="Pitluck S."/>
            <person name="Pollard M."/>
            <person name="Popkie A.P."/>
            <person name="Predki P."/>
            <person name="Quan G."/>
            <person name="Ramirez L."/>
            <person name="Rash S."/>
            <person name="Retterer J."/>
            <person name="Rodriguez A."/>
            <person name="Rogers S."/>
            <person name="Salamov A."/>
            <person name="Salazar A."/>
            <person name="She X."/>
            <person name="Smith D."/>
            <person name="Slezak T."/>
            <person name="Solovyev V."/>
            <person name="Thayer N."/>
            <person name="Tice H."/>
            <person name="Tsai M."/>
            <person name="Ustaszewska A."/>
            <person name="Vo N."/>
            <person name="Wagner M."/>
            <person name="Wheeler J."/>
            <person name="Wu K."/>
            <person name="Xie G."/>
            <person name="Yang J."/>
            <person name="Dubchak I."/>
            <person name="Furey T.S."/>
            <person name="DeJong P."/>
            <person name="Dickson M."/>
            <person name="Gordon D."/>
            <person name="Eichler E.E."/>
            <person name="Pennacchio L.A."/>
            <person name="Richardson P."/>
            <person name="Stubbs L."/>
            <person name="Rokhsar D.S."/>
            <person name="Myers R.M."/>
            <person name="Rubin E.M."/>
            <person name="Lucas S.M."/>
        </authorList>
    </citation>
    <scope>NUCLEOTIDE SEQUENCE [LARGE SCALE GENOMIC DNA]</scope>
</reference>
<reference key="3">
    <citation type="journal article" date="2004" name="Genome Res.">
        <title>The status, quality, and expansion of the NIH full-length cDNA project: the Mammalian Gene Collection (MGC).</title>
        <authorList>
            <consortium name="The MGC Project Team"/>
        </authorList>
    </citation>
    <scope>NUCLEOTIDE SEQUENCE [LARGE SCALE MRNA] (ISOFORM 2)</scope>
</reference>
<accession>Q8IZC7</accession>
<accession>C9JU83</accession>
<accession>Q0VDG9</accession>
<organism>
    <name type="scientific">Homo sapiens</name>
    <name type="common">Human</name>
    <dbReference type="NCBI Taxonomy" id="9606"/>
    <lineage>
        <taxon>Eukaryota</taxon>
        <taxon>Metazoa</taxon>
        <taxon>Chordata</taxon>
        <taxon>Craniata</taxon>
        <taxon>Vertebrata</taxon>
        <taxon>Euteleostomi</taxon>
        <taxon>Mammalia</taxon>
        <taxon>Eutheria</taxon>
        <taxon>Euarchontoglires</taxon>
        <taxon>Primates</taxon>
        <taxon>Haplorrhini</taxon>
        <taxon>Catarrhini</taxon>
        <taxon>Hominidae</taxon>
        <taxon>Homo</taxon>
    </lineage>
</organism>
<dbReference type="EMBL" id="AY149174">
    <property type="protein sequence ID" value="AAN46749.1"/>
    <property type="molecule type" value="mRNA"/>
</dbReference>
<dbReference type="EMBL" id="AC011458">
    <property type="status" value="NOT_ANNOTATED_CDS"/>
    <property type="molecule type" value="Genomic_DNA"/>
</dbReference>
<dbReference type="EMBL" id="BC119680">
    <property type="protein sequence ID" value="AAI19681.1"/>
    <property type="molecule type" value="mRNA"/>
</dbReference>
<dbReference type="CCDS" id="CCDS32971.1">
    <molecule id="Q8IZC7-1"/>
</dbReference>
<dbReference type="CCDS" id="CCDS77271.1">
    <molecule id="Q8IZC7-2"/>
</dbReference>
<dbReference type="RefSeq" id="NP_001287878.1">
    <molecule id="Q8IZC7-2"/>
    <property type="nucleotide sequence ID" value="NM_001300949.2"/>
</dbReference>
<dbReference type="RefSeq" id="NP_149981.2">
    <molecule id="Q8IZC7-1"/>
    <property type="nucleotide sequence ID" value="NM_033204.3"/>
</dbReference>
<dbReference type="RefSeq" id="XP_024307553.1">
    <molecule id="Q8IZC7-2"/>
    <property type="nucleotide sequence ID" value="XM_024451785.2"/>
</dbReference>
<dbReference type="RefSeq" id="XP_047295679.1">
    <molecule id="Q8IZC7-2"/>
    <property type="nucleotide sequence ID" value="XM_047439723.1"/>
</dbReference>
<dbReference type="SMR" id="Q8IZC7"/>
<dbReference type="BioGRID" id="125102">
    <property type="interactions" value="35"/>
</dbReference>
<dbReference type="FunCoup" id="Q8IZC7">
    <property type="interactions" value="195"/>
</dbReference>
<dbReference type="IntAct" id="Q8IZC7">
    <property type="interactions" value="27"/>
</dbReference>
<dbReference type="STRING" id="9606.ENSP00000468049"/>
<dbReference type="GlyGen" id="Q8IZC7">
    <property type="glycosylation" value="1 site"/>
</dbReference>
<dbReference type="iPTMnet" id="Q8IZC7"/>
<dbReference type="PhosphoSitePlus" id="Q8IZC7"/>
<dbReference type="BioMuta" id="ZNF101"/>
<dbReference type="DMDM" id="55976740"/>
<dbReference type="jPOST" id="Q8IZC7"/>
<dbReference type="MassIVE" id="Q8IZC7"/>
<dbReference type="PaxDb" id="9606-ENSP00000468049"/>
<dbReference type="PeptideAtlas" id="Q8IZC7"/>
<dbReference type="ProteomicsDB" id="58828"/>
<dbReference type="ProteomicsDB" id="71319">
    <molecule id="Q8IZC7-1"/>
</dbReference>
<dbReference type="Antibodypedia" id="28552">
    <property type="antibodies" value="103 antibodies from 19 providers"/>
</dbReference>
<dbReference type="DNASU" id="94039"/>
<dbReference type="Ensembl" id="ENST00000318110.9">
    <molecule id="Q8IZC7-1"/>
    <property type="protein sequence ID" value="ENSP00000319716.5"/>
    <property type="gene ID" value="ENSG00000181896.12"/>
</dbReference>
<dbReference type="Ensembl" id="ENST00000415784.6">
    <molecule id="Q8IZC7-2"/>
    <property type="protein sequence ID" value="ENSP00000400952.2"/>
    <property type="gene ID" value="ENSG00000181896.12"/>
</dbReference>
<dbReference type="Ensembl" id="ENST00000592502.2">
    <molecule id="Q8IZC7-1"/>
    <property type="protein sequence ID" value="ENSP00000468049.1"/>
    <property type="gene ID" value="ENSG00000181896.12"/>
</dbReference>
<dbReference type="GeneID" id="94039"/>
<dbReference type="KEGG" id="hsa:94039"/>
<dbReference type="MANE-Select" id="ENST00000592502.2">
    <property type="protein sequence ID" value="ENSP00000468049.1"/>
    <property type="RefSeq nucleotide sequence ID" value="NM_033204.4"/>
    <property type="RefSeq protein sequence ID" value="NP_149981.2"/>
</dbReference>
<dbReference type="UCSC" id="uc002nni.3">
    <molecule id="Q8IZC7-1"/>
    <property type="organism name" value="human"/>
</dbReference>
<dbReference type="AGR" id="HGNC:12881"/>
<dbReference type="CTD" id="94039"/>
<dbReference type="DisGeNET" id="94039"/>
<dbReference type="GeneCards" id="ZNF101"/>
<dbReference type="HGNC" id="HGNC:12881">
    <property type="gene designation" value="ZNF101"/>
</dbReference>
<dbReference type="HPA" id="ENSG00000181896">
    <property type="expression patterns" value="Tissue enhanced (lymphoid)"/>
</dbReference>
<dbReference type="MIM" id="603983">
    <property type="type" value="gene"/>
</dbReference>
<dbReference type="neXtProt" id="NX_Q8IZC7"/>
<dbReference type="OpenTargets" id="ENSG00000181896"/>
<dbReference type="PharmGKB" id="PA37470"/>
<dbReference type="VEuPathDB" id="HostDB:ENSG00000181896"/>
<dbReference type="eggNOG" id="KOG1721">
    <property type="taxonomic scope" value="Eukaryota"/>
</dbReference>
<dbReference type="GeneTree" id="ENSGT00950000182755"/>
<dbReference type="HOGENOM" id="CLU_002678_0_10_1"/>
<dbReference type="InParanoid" id="Q8IZC7"/>
<dbReference type="OMA" id="WREKPRK"/>
<dbReference type="OrthoDB" id="8922241at2759"/>
<dbReference type="PAN-GO" id="Q8IZC7">
    <property type="GO annotations" value="4 GO annotations based on evolutionary models"/>
</dbReference>
<dbReference type="PhylomeDB" id="Q8IZC7"/>
<dbReference type="PathwayCommons" id="Q8IZC7"/>
<dbReference type="Reactome" id="R-HSA-212436">
    <property type="pathway name" value="Generic Transcription Pathway"/>
</dbReference>
<dbReference type="SignaLink" id="Q8IZC7"/>
<dbReference type="BioGRID-ORCS" id="94039">
    <property type="hits" value="17 hits in 1178 CRISPR screens"/>
</dbReference>
<dbReference type="GenomeRNAi" id="94039"/>
<dbReference type="Pharos" id="Q8IZC7">
    <property type="development level" value="Tdark"/>
</dbReference>
<dbReference type="PRO" id="PR:Q8IZC7"/>
<dbReference type="Proteomes" id="UP000005640">
    <property type="component" value="Chromosome 19"/>
</dbReference>
<dbReference type="RNAct" id="Q8IZC7">
    <property type="molecule type" value="protein"/>
</dbReference>
<dbReference type="Bgee" id="ENSG00000181896">
    <property type="expression patterns" value="Expressed in buccal mucosa cell and 156 other cell types or tissues"/>
</dbReference>
<dbReference type="ExpressionAtlas" id="Q8IZC7">
    <property type="expression patterns" value="baseline and differential"/>
</dbReference>
<dbReference type="GO" id="GO:0005634">
    <property type="term" value="C:nucleus"/>
    <property type="evidence" value="ECO:0000318"/>
    <property type="project" value="GO_Central"/>
</dbReference>
<dbReference type="GO" id="GO:0000981">
    <property type="term" value="F:DNA-binding transcription factor activity, RNA polymerase II-specific"/>
    <property type="evidence" value="ECO:0000318"/>
    <property type="project" value="GO_Central"/>
</dbReference>
<dbReference type="GO" id="GO:0000977">
    <property type="term" value="F:RNA polymerase II transcription regulatory region sequence-specific DNA binding"/>
    <property type="evidence" value="ECO:0000318"/>
    <property type="project" value="GO_Central"/>
</dbReference>
<dbReference type="GO" id="GO:0008270">
    <property type="term" value="F:zinc ion binding"/>
    <property type="evidence" value="ECO:0007669"/>
    <property type="project" value="UniProtKB-KW"/>
</dbReference>
<dbReference type="GO" id="GO:0006357">
    <property type="term" value="P:regulation of transcription by RNA polymerase II"/>
    <property type="evidence" value="ECO:0000318"/>
    <property type="project" value="GO_Central"/>
</dbReference>
<dbReference type="CDD" id="cd07765">
    <property type="entry name" value="KRAB_A-box"/>
    <property type="match status" value="1"/>
</dbReference>
<dbReference type="FunFam" id="3.30.160.60:FF:000193">
    <property type="entry name" value="Zinc finger protein 300"/>
    <property type="match status" value="3"/>
</dbReference>
<dbReference type="FunFam" id="3.30.160.60:FF:000184">
    <property type="entry name" value="Zinc finger protein 333"/>
    <property type="match status" value="2"/>
</dbReference>
<dbReference type="FunFam" id="3.30.160.60:FF:000371">
    <property type="entry name" value="Zinc finger protein 555"/>
    <property type="match status" value="1"/>
</dbReference>
<dbReference type="FunFam" id="3.30.160.60:FF:000149">
    <property type="entry name" value="Zinc finger protein 569"/>
    <property type="match status" value="1"/>
</dbReference>
<dbReference type="FunFam" id="3.30.160.60:FF:001016">
    <property type="entry name" value="zinc finger protein 850-like"/>
    <property type="match status" value="1"/>
</dbReference>
<dbReference type="FunFam" id="3.30.160.60:FF:002179">
    <property type="entry name" value="Zinc finger protein 961"/>
    <property type="match status" value="1"/>
</dbReference>
<dbReference type="Gene3D" id="6.10.140.140">
    <property type="match status" value="1"/>
</dbReference>
<dbReference type="Gene3D" id="3.30.160.60">
    <property type="entry name" value="Classic Zinc Finger"/>
    <property type="match status" value="10"/>
</dbReference>
<dbReference type="InterPro" id="IPR001909">
    <property type="entry name" value="KRAB"/>
</dbReference>
<dbReference type="InterPro" id="IPR036051">
    <property type="entry name" value="KRAB_dom_sf"/>
</dbReference>
<dbReference type="InterPro" id="IPR050758">
    <property type="entry name" value="Znf_C2H2-type"/>
</dbReference>
<dbReference type="InterPro" id="IPR036236">
    <property type="entry name" value="Znf_C2H2_sf"/>
</dbReference>
<dbReference type="InterPro" id="IPR013087">
    <property type="entry name" value="Znf_C2H2_type"/>
</dbReference>
<dbReference type="PANTHER" id="PTHR23234:SF10">
    <property type="entry name" value="RIKEN CDNA 6720489N17 GENE-RELATED"/>
    <property type="match status" value="1"/>
</dbReference>
<dbReference type="PANTHER" id="PTHR23234">
    <property type="entry name" value="ZNF44 PROTEIN"/>
    <property type="match status" value="1"/>
</dbReference>
<dbReference type="Pfam" id="PF01352">
    <property type="entry name" value="KRAB"/>
    <property type="match status" value="1"/>
</dbReference>
<dbReference type="Pfam" id="PF00096">
    <property type="entry name" value="zf-C2H2"/>
    <property type="match status" value="6"/>
</dbReference>
<dbReference type="SMART" id="SM00349">
    <property type="entry name" value="KRAB"/>
    <property type="match status" value="1"/>
</dbReference>
<dbReference type="SMART" id="SM00355">
    <property type="entry name" value="ZnF_C2H2"/>
    <property type="match status" value="9"/>
</dbReference>
<dbReference type="SUPFAM" id="SSF57667">
    <property type="entry name" value="beta-beta-alpha zinc fingers"/>
    <property type="match status" value="6"/>
</dbReference>
<dbReference type="SUPFAM" id="SSF109640">
    <property type="entry name" value="KRAB domain (Kruppel-associated box)"/>
    <property type="match status" value="1"/>
</dbReference>
<dbReference type="PROSITE" id="PS50805">
    <property type="entry name" value="KRAB"/>
    <property type="match status" value="1"/>
</dbReference>
<dbReference type="PROSITE" id="PS00028">
    <property type="entry name" value="ZINC_FINGER_C2H2_1"/>
    <property type="match status" value="9"/>
</dbReference>
<dbReference type="PROSITE" id="PS50157">
    <property type="entry name" value="ZINC_FINGER_C2H2_2"/>
    <property type="match status" value="10"/>
</dbReference>
<sequence length="436" mass="50339">MDSVAFEDVAVNFTQEEWALLSPSQKNLYRDVTLETFRNLASVGIQWKDQDIENLYQNLGIKLRSLVERLCGRKEGNEHRETFSQIPDCHLNKKSQTGVKPCKCSVCGKVFLRHSFLDRHMRAHAGHKRSECGGEWRETPRKQKQHGKASISPSSGARRTVTPTRKRPYECKVCGKAFNSPNLFQIHQRTHTGKRSYKCREIVRAFTVSSFFRKHGKMHTGEKRYECKYCGKPIDYPSLFQIHVRTHTGEKPYKCKQCGKAFISAGYLRTHEIRSHALEKSHQCQECGKKLSCSSSLHRHERTHSGGKLYECQKCAKVFRCPTSLQAHERAHTGERPYECNKCGKTFNYPSCFRRHKKTHSGEKPYECTRCGKAFGWCSSLRRHEMTHTGEKPFDCKQCGKVFTFSNYLRLHERTHLAGRSQCFGRRQGDHLSPGV</sequence>
<protein>
    <recommendedName>
        <fullName>Zinc finger protein 101</fullName>
    </recommendedName>
    <alternativeName>
        <fullName>Zinc finger protein HZF12</fullName>
    </alternativeName>
</protein>
<feature type="chain" id="PRO_0000047406" description="Zinc finger protein 101">
    <location>
        <begin position="1"/>
        <end position="436"/>
    </location>
</feature>
<feature type="domain" description="KRAB" evidence="2">
    <location>
        <begin position="4"/>
        <end position="82"/>
    </location>
</feature>
<feature type="zinc finger region" description="C2H2-type 1" evidence="1">
    <location>
        <begin position="102"/>
        <end position="124"/>
    </location>
</feature>
<feature type="zinc finger region" description="C2H2-type 2" evidence="1">
    <location>
        <begin position="169"/>
        <end position="191"/>
    </location>
</feature>
<feature type="zinc finger region" description="C2H2-type 3; degenerate" evidence="1">
    <location>
        <begin position="197"/>
        <end position="219"/>
    </location>
</feature>
<feature type="zinc finger region" description="C2H2-type 4" evidence="1">
    <location>
        <begin position="225"/>
        <end position="247"/>
    </location>
</feature>
<feature type="zinc finger region" description="C2H2-type 5" evidence="1">
    <location>
        <begin position="253"/>
        <end position="276"/>
    </location>
</feature>
<feature type="zinc finger region" description="C2H2-type 6" evidence="1">
    <location>
        <begin position="282"/>
        <end position="304"/>
    </location>
</feature>
<feature type="zinc finger region" description="C2H2-type 7" evidence="1">
    <location>
        <begin position="310"/>
        <end position="332"/>
    </location>
</feature>
<feature type="zinc finger region" description="C2H2-type 8" evidence="1">
    <location>
        <begin position="338"/>
        <end position="360"/>
    </location>
</feature>
<feature type="zinc finger region" description="C2H2-type 9" evidence="1">
    <location>
        <begin position="366"/>
        <end position="388"/>
    </location>
</feature>
<feature type="zinc finger region" description="C2H2-type 10" evidence="1">
    <location>
        <begin position="394"/>
        <end position="416"/>
    </location>
</feature>
<feature type="region of interest" description="Disordered" evidence="3">
    <location>
        <begin position="128"/>
        <end position="164"/>
    </location>
</feature>
<feature type="compositionally biased region" description="Basic and acidic residues" evidence="3">
    <location>
        <begin position="128"/>
        <end position="141"/>
    </location>
</feature>
<feature type="compositionally biased region" description="Polar residues" evidence="3">
    <location>
        <begin position="151"/>
        <end position="163"/>
    </location>
</feature>
<feature type="splice variant" id="VSP_055937" description="In isoform 2." evidence="5">
    <location>
        <begin position="1"/>
        <end position="120"/>
    </location>
</feature>
<feature type="sequence variant" id="VAR_024197" description="In dbSNP:rs4808209.">
    <original>M</original>
    <variation>L</variation>
    <location>
        <position position="121"/>
    </location>
</feature>
<gene>
    <name type="primary">ZNF101</name>
</gene>
<keyword id="KW-0025">Alternative splicing</keyword>
<keyword id="KW-0238">DNA-binding</keyword>
<keyword id="KW-0479">Metal-binding</keyword>
<keyword id="KW-0539">Nucleus</keyword>
<keyword id="KW-1267">Proteomics identification</keyword>
<keyword id="KW-1185">Reference proteome</keyword>
<keyword id="KW-0677">Repeat</keyword>
<keyword id="KW-0804">Transcription</keyword>
<keyword id="KW-0805">Transcription regulation</keyword>
<keyword id="KW-0862">Zinc</keyword>
<keyword id="KW-0863">Zinc-finger</keyword>
<name>ZN101_HUMAN</name>